<keyword id="KW-0028">Amino-acid biosynthesis</keyword>
<keyword id="KW-0100">Branched-chain amino acid biosynthesis</keyword>
<keyword id="KW-0432">Leucine biosynthesis</keyword>
<keyword id="KW-0456">Lyase</keyword>
<keyword id="KW-1185">Reference proteome</keyword>
<gene>
    <name evidence="1" type="primary">leuD</name>
    <name type="ordered locus">BA_1423</name>
    <name type="ordered locus">GBAA_1423</name>
    <name type="ordered locus">BAS1314</name>
</gene>
<feature type="chain" id="PRO_0000141776" description="3-isopropylmalate dehydratase small subunit">
    <location>
        <begin position="1"/>
        <end position="193"/>
    </location>
</feature>
<name>LEUD_BACAN</name>
<protein>
    <recommendedName>
        <fullName evidence="1">3-isopropylmalate dehydratase small subunit</fullName>
        <ecNumber evidence="1">4.2.1.33</ecNumber>
    </recommendedName>
    <alternativeName>
        <fullName evidence="1">Alpha-IPM isomerase</fullName>
        <shortName evidence="1">IPMI</shortName>
    </alternativeName>
    <alternativeName>
        <fullName evidence="1">Isopropylmalate isomerase</fullName>
    </alternativeName>
</protein>
<evidence type="ECO:0000255" key="1">
    <source>
        <dbReference type="HAMAP-Rule" id="MF_01031"/>
    </source>
</evidence>
<accession>Q81T65</accession>
<accession>Q6I1E8</accession>
<accession>Q6KV94</accession>
<proteinExistence type="inferred from homology"/>
<comment type="function">
    <text evidence="1">Catalyzes the isomerization between 2-isopropylmalate and 3-isopropylmalate, via the formation of 2-isopropylmaleate.</text>
</comment>
<comment type="catalytic activity">
    <reaction evidence="1">
        <text>(2R,3S)-3-isopropylmalate = (2S)-2-isopropylmalate</text>
        <dbReference type="Rhea" id="RHEA:32287"/>
        <dbReference type="ChEBI" id="CHEBI:1178"/>
        <dbReference type="ChEBI" id="CHEBI:35121"/>
        <dbReference type="EC" id="4.2.1.33"/>
    </reaction>
</comment>
<comment type="pathway">
    <text evidence="1">Amino-acid biosynthesis; L-leucine biosynthesis; L-leucine from 3-methyl-2-oxobutanoate: step 2/4.</text>
</comment>
<comment type="subunit">
    <text evidence="1">Heterodimer of LeuC and LeuD.</text>
</comment>
<comment type="similarity">
    <text evidence="1">Belongs to the LeuD family. LeuD type 1 subfamily.</text>
</comment>
<sequence length="193" mass="22605">MEPFRIHKGTAAVLMNDNIDTDQIIPKQYLKRIERTGFGKFLFDEWRYDNERHENPNFPLNAPDRKGASILITGNNFGCGSSREHAPWALADYGFRVIIAGGFADIFYMNCMKNGMLPIVMDKEMREKLVKTDAREQIEVDLENEVITTSTHRFHFTIEKMWKEKLLNGLDEISITMQYEQEIKEYERRIAAY</sequence>
<dbReference type="EC" id="4.2.1.33" evidence="1"/>
<dbReference type="EMBL" id="AE016879">
    <property type="protein sequence ID" value="AAP25366.1"/>
    <property type="molecule type" value="Genomic_DNA"/>
</dbReference>
<dbReference type="EMBL" id="AE017334">
    <property type="protein sequence ID" value="AAT30519.1"/>
    <property type="molecule type" value="Genomic_DNA"/>
</dbReference>
<dbReference type="EMBL" id="AE017225">
    <property type="protein sequence ID" value="AAT53634.1"/>
    <property type="molecule type" value="Genomic_DNA"/>
</dbReference>
<dbReference type="RefSeq" id="NP_843880.1">
    <property type="nucleotide sequence ID" value="NC_003997.3"/>
</dbReference>
<dbReference type="RefSeq" id="WP_000433175.1">
    <property type="nucleotide sequence ID" value="NZ_WXXJ01000017.1"/>
</dbReference>
<dbReference type="RefSeq" id="YP_027583.1">
    <property type="nucleotide sequence ID" value="NC_005945.1"/>
</dbReference>
<dbReference type="SMR" id="Q81T65"/>
<dbReference type="STRING" id="261594.GBAA_1423"/>
<dbReference type="DNASU" id="1086008"/>
<dbReference type="GeneID" id="45021402"/>
<dbReference type="KEGG" id="ban:BA_1423"/>
<dbReference type="KEGG" id="bar:GBAA_1423"/>
<dbReference type="KEGG" id="bat:BAS1314"/>
<dbReference type="PATRIC" id="fig|198094.11.peg.1396"/>
<dbReference type="eggNOG" id="COG0066">
    <property type="taxonomic scope" value="Bacteria"/>
</dbReference>
<dbReference type="HOGENOM" id="CLU_081378_0_3_9"/>
<dbReference type="OMA" id="FGQHLFH"/>
<dbReference type="OrthoDB" id="9777465at2"/>
<dbReference type="UniPathway" id="UPA00048">
    <property type="reaction ID" value="UER00071"/>
</dbReference>
<dbReference type="Proteomes" id="UP000000427">
    <property type="component" value="Chromosome"/>
</dbReference>
<dbReference type="Proteomes" id="UP000000594">
    <property type="component" value="Chromosome"/>
</dbReference>
<dbReference type="GO" id="GO:0009316">
    <property type="term" value="C:3-isopropylmalate dehydratase complex"/>
    <property type="evidence" value="ECO:0007669"/>
    <property type="project" value="InterPro"/>
</dbReference>
<dbReference type="GO" id="GO:0003861">
    <property type="term" value="F:3-isopropylmalate dehydratase activity"/>
    <property type="evidence" value="ECO:0007669"/>
    <property type="project" value="UniProtKB-UniRule"/>
</dbReference>
<dbReference type="GO" id="GO:0009098">
    <property type="term" value="P:L-leucine biosynthetic process"/>
    <property type="evidence" value="ECO:0007669"/>
    <property type="project" value="UniProtKB-UniRule"/>
</dbReference>
<dbReference type="CDD" id="cd01577">
    <property type="entry name" value="IPMI_Swivel"/>
    <property type="match status" value="1"/>
</dbReference>
<dbReference type="FunFam" id="3.20.19.10:FF:000003">
    <property type="entry name" value="3-isopropylmalate dehydratase small subunit"/>
    <property type="match status" value="1"/>
</dbReference>
<dbReference type="Gene3D" id="3.20.19.10">
    <property type="entry name" value="Aconitase, domain 4"/>
    <property type="match status" value="1"/>
</dbReference>
<dbReference type="HAMAP" id="MF_01031">
    <property type="entry name" value="LeuD_type1"/>
    <property type="match status" value="1"/>
</dbReference>
<dbReference type="InterPro" id="IPR004431">
    <property type="entry name" value="3-IsopropMal_deHydase_ssu"/>
</dbReference>
<dbReference type="InterPro" id="IPR015928">
    <property type="entry name" value="Aconitase/3IPM_dehydase_swvl"/>
</dbReference>
<dbReference type="InterPro" id="IPR000573">
    <property type="entry name" value="AconitaseA/IPMdHydase_ssu_swvl"/>
</dbReference>
<dbReference type="InterPro" id="IPR033940">
    <property type="entry name" value="IPMI_Swivel"/>
</dbReference>
<dbReference type="InterPro" id="IPR050075">
    <property type="entry name" value="LeuD"/>
</dbReference>
<dbReference type="NCBIfam" id="TIGR00171">
    <property type="entry name" value="leuD"/>
    <property type="match status" value="1"/>
</dbReference>
<dbReference type="NCBIfam" id="NF002458">
    <property type="entry name" value="PRK01641.1"/>
    <property type="match status" value="1"/>
</dbReference>
<dbReference type="PANTHER" id="PTHR43345:SF5">
    <property type="entry name" value="3-ISOPROPYLMALATE DEHYDRATASE SMALL SUBUNIT"/>
    <property type="match status" value="1"/>
</dbReference>
<dbReference type="PANTHER" id="PTHR43345">
    <property type="entry name" value="3-ISOPROPYLMALATE DEHYDRATASE SMALL SUBUNIT 2-RELATED-RELATED"/>
    <property type="match status" value="1"/>
</dbReference>
<dbReference type="Pfam" id="PF00694">
    <property type="entry name" value="Aconitase_C"/>
    <property type="match status" value="1"/>
</dbReference>
<dbReference type="SUPFAM" id="SSF52016">
    <property type="entry name" value="LeuD/IlvD-like"/>
    <property type="match status" value="1"/>
</dbReference>
<organism>
    <name type="scientific">Bacillus anthracis</name>
    <dbReference type="NCBI Taxonomy" id="1392"/>
    <lineage>
        <taxon>Bacteria</taxon>
        <taxon>Bacillati</taxon>
        <taxon>Bacillota</taxon>
        <taxon>Bacilli</taxon>
        <taxon>Bacillales</taxon>
        <taxon>Bacillaceae</taxon>
        <taxon>Bacillus</taxon>
        <taxon>Bacillus cereus group</taxon>
    </lineage>
</organism>
<reference key="1">
    <citation type="journal article" date="2003" name="Nature">
        <title>The genome sequence of Bacillus anthracis Ames and comparison to closely related bacteria.</title>
        <authorList>
            <person name="Read T.D."/>
            <person name="Peterson S.N."/>
            <person name="Tourasse N.J."/>
            <person name="Baillie L.W."/>
            <person name="Paulsen I.T."/>
            <person name="Nelson K.E."/>
            <person name="Tettelin H."/>
            <person name="Fouts D.E."/>
            <person name="Eisen J.A."/>
            <person name="Gill S.R."/>
            <person name="Holtzapple E.K."/>
            <person name="Okstad O.A."/>
            <person name="Helgason E."/>
            <person name="Rilstone J."/>
            <person name="Wu M."/>
            <person name="Kolonay J.F."/>
            <person name="Beanan M.J."/>
            <person name="Dodson R.J."/>
            <person name="Brinkac L.M."/>
            <person name="Gwinn M.L."/>
            <person name="DeBoy R.T."/>
            <person name="Madpu R."/>
            <person name="Daugherty S.C."/>
            <person name="Durkin A.S."/>
            <person name="Haft D.H."/>
            <person name="Nelson W.C."/>
            <person name="Peterson J.D."/>
            <person name="Pop M."/>
            <person name="Khouri H.M."/>
            <person name="Radune D."/>
            <person name="Benton J.L."/>
            <person name="Mahamoud Y."/>
            <person name="Jiang L."/>
            <person name="Hance I.R."/>
            <person name="Weidman J.F."/>
            <person name="Berry K.J."/>
            <person name="Plaut R.D."/>
            <person name="Wolf A.M."/>
            <person name="Watkins K.L."/>
            <person name="Nierman W.C."/>
            <person name="Hazen A."/>
            <person name="Cline R.T."/>
            <person name="Redmond C."/>
            <person name="Thwaite J.E."/>
            <person name="White O."/>
            <person name="Salzberg S.L."/>
            <person name="Thomason B."/>
            <person name="Friedlander A.M."/>
            <person name="Koehler T.M."/>
            <person name="Hanna P.C."/>
            <person name="Kolstoe A.-B."/>
            <person name="Fraser C.M."/>
        </authorList>
    </citation>
    <scope>NUCLEOTIDE SEQUENCE [LARGE SCALE GENOMIC DNA]</scope>
    <source>
        <strain>Ames / isolate Porton</strain>
    </source>
</reference>
<reference key="2">
    <citation type="journal article" date="2009" name="J. Bacteriol.">
        <title>The complete genome sequence of Bacillus anthracis Ames 'Ancestor'.</title>
        <authorList>
            <person name="Ravel J."/>
            <person name="Jiang L."/>
            <person name="Stanley S.T."/>
            <person name="Wilson M.R."/>
            <person name="Decker R.S."/>
            <person name="Read T.D."/>
            <person name="Worsham P."/>
            <person name="Keim P.S."/>
            <person name="Salzberg S.L."/>
            <person name="Fraser-Liggett C.M."/>
            <person name="Rasko D.A."/>
        </authorList>
    </citation>
    <scope>NUCLEOTIDE SEQUENCE [LARGE SCALE GENOMIC DNA]</scope>
    <source>
        <strain>Ames ancestor</strain>
    </source>
</reference>
<reference key="3">
    <citation type="submission" date="2004-01" db="EMBL/GenBank/DDBJ databases">
        <title>Complete genome sequence of Bacillus anthracis Sterne.</title>
        <authorList>
            <person name="Brettin T.S."/>
            <person name="Bruce D."/>
            <person name="Challacombe J.F."/>
            <person name="Gilna P."/>
            <person name="Han C."/>
            <person name="Hill K."/>
            <person name="Hitchcock P."/>
            <person name="Jackson P."/>
            <person name="Keim P."/>
            <person name="Longmire J."/>
            <person name="Lucas S."/>
            <person name="Okinaka R."/>
            <person name="Richardson P."/>
            <person name="Rubin E."/>
            <person name="Tice H."/>
        </authorList>
    </citation>
    <scope>NUCLEOTIDE SEQUENCE [LARGE SCALE GENOMIC DNA]</scope>
    <source>
        <strain>Sterne</strain>
    </source>
</reference>